<gene>
    <name type="primary">TIP2-3</name>
    <name type="ordered locus">At5g47450</name>
    <name type="ORF">MNJ7.4</name>
</gene>
<evidence type="ECO:0000250" key="1">
    <source>
        <dbReference type="UniProtKB" id="P43286"/>
    </source>
</evidence>
<evidence type="ECO:0000250" key="2">
    <source>
        <dbReference type="UniProtKB" id="P61837"/>
    </source>
</evidence>
<evidence type="ECO:0000255" key="3"/>
<evidence type="ECO:0000269" key="4">
    <source>
    </source>
</evidence>
<evidence type="ECO:0000269" key="5">
    <source>
    </source>
</evidence>
<evidence type="ECO:0000269" key="6">
    <source>
    </source>
</evidence>
<evidence type="ECO:0000305" key="7"/>
<feature type="chain" id="PRO_0000064013" description="Aquaporin TIP2-3">
    <location>
        <begin position="1"/>
        <end position="250"/>
    </location>
</feature>
<feature type="topological domain" description="Cytoplasmic" evidence="3">
    <location>
        <begin position="1"/>
        <end position="24"/>
    </location>
</feature>
<feature type="transmembrane region" description="Helical; Name=1" evidence="3">
    <location>
        <begin position="25"/>
        <end position="45"/>
    </location>
</feature>
<feature type="topological domain" description="Vacuolar" evidence="3">
    <location>
        <begin position="46"/>
        <end position="54"/>
    </location>
</feature>
<feature type="transmembrane region" description="Helical; Name=2" evidence="3">
    <location>
        <begin position="55"/>
        <end position="75"/>
    </location>
</feature>
<feature type="topological domain" description="Cytoplasmic" evidence="3">
    <location>
        <begin position="76"/>
        <end position="101"/>
    </location>
</feature>
<feature type="transmembrane region" description="Helical; Name=3" evidence="3">
    <location>
        <begin position="102"/>
        <end position="122"/>
    </location>
</feature>
<feature type="topological domain" description="Vacuolar" evidence="3">
    <location>
        <begin position="123"/>
        <end position="134"/>
    </location>
</feature>
<feature type="transmembrane region" description="Helical; Name=4" evidence="3">
    <location>
        <begin position="135"/>
        <end position="155"/>
    </location>
</feature>
<feature type="topological domain" description="Cytoplasmic" evidence="3">
    <location>
        <begin position="156"/>
        <end position="168"/>
    </location>
</feature>
<feature type="transmembrane region" description="Helical; Name=5" evidence="3">
    <location>
        <begin position="169"/>
        <end position="189"/>
    </location>
</feature>
<feature type="topological domain" description="Vacuolar" evidence="3">
    <location>
        <begin position="190"/>
        <end position="217"/>
    </location>
</feature>
<feature type="transmembrane region" description="Helical; Name=6" evidence="3">
    <location>
        <begin position="218"/>
        <end position="238"/>
    </location>
</feature>
<feature type="topological domain" description="Cytoplasmic" evidence="3">
    <location>
        <begin position="239"/>
        <end position="250"/>
    </location>
</feature>
<feature type="short sequence motif" description="NPA 1">
    <location>
        <begin position="83"/>
        <end position="85"/>
    </location>
</feature>
<feature type="short sequence motif" description="NPA 2">
    <location>
        <begin position="197"/>
        <end position="199"/>
    </location>
</feature>
<feature type="modified residue" description="N-acetylmethionine" evidence="2">
    <location>
        <position position="1"/>
    </location>
</feature>
<feature type="modified residue" description="N6,N6-dimethyllysine" evidence="1">
    <location>
        <position position="3"/>
    </location>
</feature>
<feature type="sequence conflict" description="In Ref. 4; BAF01204." evidence="7" ref="4">
    <original>E</original>
    <variation>G</variation>
    <location>
        <position position="141"/>
    </location>
</feature>
<keyword id="KW-0007">Acetylation</keyword>
<keyword id="KW-0472">Membrane</keyword>
<keyword id="KW-0488">Methylation</keyword>
<keyword id="KW-1185">Reference proteome</keyword>
<keyword id="KW-0677">Repeat</keyword>
<keyword id="KW-0812">Transmembrane</keyword>
<keyword id="KW-1133">Transmembrane helix</keyword>
<keyword id="KW-0813">Transport</keyword>
<keyword id="KW-0926">Vacuole</keyword>
<reference key="1">
    <citation type="submission" date="1999-04" db="EMBL/GenBank/DDBJ databases">
        <title>Structural analysis of Arabidopsis thaliana chromosome 5. XI.</title>
        <authorList>
            <person name="Kaneko T."/>
            <person name="Katoh T."/>
            <person name="Asamizu E."/>
            <person name="Sato S."/>
            <person name="Nakamura Y."/>
            <person name="Kotani H."/>
            <person name="Tabata S."/>
        </authorList>
    </citation>
    <scope>NUCLEOTIDE SEQUENCE [LARGE SCALE GENOMIC DNA]</scope>
    <source>
        <strain>cv. Columbia</strain>
    </source>
</reference>
<reference key="2">
    <citation type="journal article" date="2017" name="Plant J.">
        <title>Araport11: a complete reannotation of the Arabidopsis thaliana reference genome.</title>
        <authorList>
            <person name="Cheng C.Y."/>
            <person name="Krishnakumar V."/>
            <person name="Chan A.P."/>
            <person name="Thibaud-Nissen F."/>
            <person name="Schobel S."/>
            <person name="Town C.D."/>
        </authorList>
    </citation>
    <scope>GENOME REANNOTATION</scope>
    <source>
        <strain>cv. Columbia</strain>
    </source>
</reference>
<reference key="3">
    <citation type="submission" date="2004-02" db="EMBL/GenBank/DDBJ databases">
        <title>Arabidopsis ORF clones.</title>
        <authorList>
            <person name="Kim C.J."/>
            <person name="Chen H."/>
            <person name="Cheuk R.F."/>
            <person name="Shinn P."/>
            <person name="Ecker J.R."/>
        </authorList>
    </citation>
    <scope>NUCLEOTIDE SEQUENCE [LARGE SCALE MRNA]</scope>
    <source>
        <strain>cv. Columbia</strain>
    </source>
</reference>
<reference key="4">
    <citation type="submission" date="2006-07" db="EMBL/GenBank/DDBJ databases">
        <title>Large-scale analysis of RIKEN Arabidopsis full-length (RAFL) cDNAs.</title>
        <authorList>
            <person name="Totoki Y."/>
            <person name="Seki M."/>
            <person name="Ishida J."/>
            <person name="Nakajima M."/>
            <person name="Enju A."/>
            <person name="Kamiya A."/>
            <person name="Narusaka M."/>
            <person name="Shin-i T."/>
            <person name="Nakagawa M."/>
            <person name="Sakamoto N."/>
            <person name="Oishi K."/>
            <person name="Kohara Y."/>
            <person name="Kobayashi M."/>
            <person name="Toyoda A."/>
            <person name="Sakaki Y."/>
            <person name="Sakurai T."/>
            <person name="Iida K."/>
            <person name="Akiyama K."/>
            <person name="Satou M."/>
            <person name="Toyoda T."/>
            <person name="Konagaya A."/>
            <person name="Carninci P."/>
            <person name="Kawai J."/>
            <person name="Hayashizaki Y."/>
            <person name="Shinozaki K."/>
        </authorList>
    </citation>
    <scope>NUCLEOTIDE SEQUENCE [LARGE SCALE MRNA]</scope>
    <source>
        <strain>cv. Columbia</strain>
    </source>
</reference>
<reference key="5">
    <citation type="journal article" date="2002" name="Genome Biol.">
        <title>From genome to function: the Arabidopsis aquaporins.</title>
        <authorList>
            <person name="Quigley F."/>
            <person name="Rosenberg J.M."/>
            <person name="Shachar-Hill Y."/>
            <person name="Bohnert H.J."/>
        </authorList>
    </citation>
    <scope>NOMENCLATURE</scope>
    <scope>TISSUE SPECIFICITY</scope>
</reference>
<reference key="6">
    <citation type="journal article" date="2005" name="Plant Physiol.">
        <title>Tonoplast intrinsic proteins AtTIP2;1 and AtTIP2;3 facilitate NH3 transport into the vacuole.</title>
        <authorList>
            <person name="Loque D."/>
            <person name="Ludewig U."/>
            <person name="Yuan L."/>
            <person name="von Wiren N."/>
        </authorList>
    </citation>
    <scope>FUNCTION</scope>
    <scope>SUBCELLULAR LOCATION</scope>
    <scope>INDUCTION</scope>
</reference>
<reference key="7">
    <citation type="journal article" date="2006" name="J. Gen. Virol.">
        <title>Arabidopsis tonoplast proteins TIP1 and TIP2 interact with the cucumber mosaic virus 1a replication protein.</title>
        <authorList>
            <person name="Kim M.J."/>
            <person name="Kim H.R."/>
            <person name="Paek K.-H."/>
        </authorList>
    </citation>
    <scope>INTERACTION WITH CMV PROTEIN 1A</scope>
</reference>
<comment type="function">
    <text evidence="5">Transports methylammonium or ammonium in yeast cells, preferentially at high medium pH. May participate in vacuolar compartmentation and detoxification of ammonium.</text>
</comment>
<comment type="subunit">
    <text evidence="6">Interacts with cucumber mosaic virus (CMV) Protein 1a.</text>
</comment>
<comment type="subcellular location">
    <subcellularLocation>
        <location evidence="5">Vacuole membrane</location>
        <topology evidence="5">Multi-pass membrane protein</topology>
    </subcellularLocation>
    <text>Tonoplast.</text>
</comment>
<comment type="tissue specificity">
    <text evidence="4">Widely expressed.</text>
</comment>
<comment type="induction">
    <text evidence="5">By ammonium nitrate in roots. Expressed in roots with a circadian rhythm showing an increase after onset of light, a peak approximately at midday and a decline to lowest levels before offset of light.</text>
</comment>
<comment type="domain">
    <text>Aquaporins contain two tandem repeats each containing three membrane-spanning domains and a pore-forming loop with the signature motif Asn-Pro-Ala (NPA).</text>
</comment>
<comment type="similarity">
    <text evidence="7">Belongs to the MIP/aquaporin (TC 1.A.8) family. TIP (TC 1.A.8.10) subfamily.</text>
</comment>
<protein>
    <recommendedName>
        <fullName>Aquaporin TIP2-3</fullName>
    </recommendedName>
    <alternativeName>
        <fullName>Tonoplast intrinsic protein 2-3</fullName>
        <shortName>AtTIP2;3</shortName>
    </alternativeName>
</protein>
<name>TIP23_ARATH</name>
<organism>
    <name type="scientific">Arabidopsis thaliana</name>
    <name type="common">Mouse-ear cress</name>
    <dbReference type="NCBI Taxonomy" id="3702"/>
    <lineage>
        <taxon>Eukaryota</taxon>
        <taxon>Viridiplantae</taxon>
        <taxon>Streptophyta</taxon>
        <taxon>Embryophyta</taxon>
        <taxon>Tracheophyta</taxon>
        <taxon>Spermatophyta</taxon>
        <taxon>Magnoliopsida</taxon>
        <taxon>eudicotyledons</taxon>
        <taxon>Gunneridae</taxon>
        <taxon>Pentapetalae</taxon>
        <taxon>rosids</taxon>
        <taxon>malvids</taxon>
        <taxon>Brassicales</taxon>
        <taxon>Brassicaceae</taxon>
        <taxon>Camelineae</taxon>
        <taxon>Arabidopsis</taxon>
    </lineage>
</organism>
<dbReference type="EMBL" id="AB025628">
    <property type="protein sequence ID" value="BAB09071.1"/>
    <property type="molecule type" value="Genomic_DNA"/>
</dbReference>
<dbReference type="EMBL" id="CP002688">
    <property type="protein sequence ID" value="AED95514.1"/>
    <property type="molecule type" value="Genomic_DNA"/>
</dbReference>
<dbReference type="EMBL" id="BT011212">
    <property type="protein sequence ID" value="AAR92248.1"/>
    <property type="molecule type" value="mRNA"/>
</dbReference>
<dbReference type="EMBL" id="BT011663">
    <property type="protein sequence ID" value="AAS47669.1"/>
    <property type="molecule type" value="mRNA"/>
</dbReference>
<dbReference type="EMBL" id="AK229341">
    <property type="protein sequence ID" value="BAF01204.1"/>
    <property type="molecule type" value="mRNA"/>
</dbReference>
<dbReference type="SMR" id="Q9FGL2"/>
<dbReference type="BioGRID" id="20042">
    <property type="interactions" value="2"/>
</dbReference>
<dbReference type="FunCoup" id="Q9FGL2">
    <property type="interactions" value="564"/>
</dbReference>
<dbReference type="IntAct" id="Q9FGL2">
    <property type="interactions" value="1"/>
</dbReference>
<dbReference type="STRING" id="3702.Q9FGL2"/>
<dbReference type="TCDB" id="1.A.8.10.4">
    <property type="family name" value="the major intrinsic protein (mip) family"/>
</dbReference>
<dbReference type="PaxDb" id="3702-AT5G47450.1"/>
<dbReference type="ProteomicsDB" id="234305"/>
<dbReference type="EnsemblPlants" id="AT5G47450.1">
    <property type="protein sequence ID" value="AT5G47450.1"/>
    <property type="gene ID" value="AT5G47450"/>
</dbReference>
<dbReference type="GeneID" id="834794"/>
<dbReference type="Gramene" id="AT5G47450.1">
    <property type="protein sequence ID" value="AT5G47450.1"/>
    <property type="gene ID" value="AT5G47450"/>
</dbReference>
<dbReference type="KEGG" id="ath:AT5G47450"/>
<dbReference type="Araport" id="AT5G47450"/>
<dbReference type="TAIR" id="AT5G47450">
    <property type="gene designation" value="TIP2"/>
</dbReference>
<dbReference type="eggNOG" id="KOG0223">
    <property type="taxonomic scope" value="Eukaryota"/>
</dbReference>
<dbReference type="HOGENOM" id="CLU_020019_3_4_1"/>
<dbReference type="InParanoid" id="Q9FGL2"/>
<dbReference type="OMA" id="FWVGPIS"/>
<dbReference type="OrthoDB" id="3222at2759"/>
<dbReference type="PhylomeDB" id="Q9FGL2"/>
<dbReference type="PRO" id="PR:Q9FGL2"/>
<dbReference type="Proteomes" id="UP000006548">
    <property type="component" value="Chromosome 5"/>
</dbReference>
<dbReference type="ExpressionAtlas" id="Q9FGL2">
    <property type="expression patterns" value="baseline and differential"/>
</dbReference>
<dbReference type="GO" id="GO:0042807">
    <property type="term" value="C:central vacuole"/>
    <property type="evidence" value="ECO:0000314"/>
    <property type="project" value="TAIR"/>
</dbReference>
<dbReference type="GO" id="GO:0009705">
    <property type="term" value="C:plant-type vacuole membrane"/>
    <property type="evidence" value="ECO:0000314"/>
    <property type="project" value="TAIR"/>
</dbReference>
<dbReference type="GO" id="GO:0015267">
    <property type="term" value="F:channel activity"/>
    <property type="evidence" value="ECO:0007669"/>
    <property type="project" value="InterPro"/>
</dbReference>
<dbReference type="GO" id="GO:0015200">
    <property type="term" value="F:methylammonium transmembrane transporter activity"/>
    <property type="evidence" value="ECO:0000314"/>
    <property type="project" value="TAIR"/>
</dbReference>
<dbReference type="CDD" id="cd00333">
    <property type="entry name" value="MIP"/>
    <property type="match status" value="1"/>
</dbReference>
<dbReference type="FunFam" id="1.20.1080.10:FF:000002">
    <property type="entry name" value="Probable aquaporin TIP1-1"/>
    <property type="match status" value="1"/>
</dbReference>
<dbReference type="Gene3D" id="1.20.1080.10">
    <property type="entry name" value="Glycerol uptake facilitator protein"/>
    <property type="match status" value="1"/>
</dbReference>
<dbReference type="InterPro" id="IPR023271">
    <property type="entry name" value="Aquaporin-like"/>
</dbReference>
<dbReference type="InterPro" id="IPR034294">
    <property type="entry name" value="Aquaporin_transptr"/>
</dbReference>
<dbReference type="InterPro" id="IPR000425">
    <property type="entry name" value="MIP"/>
</dbReference>
<dbReference type="InterPro" id="IPR022357">
    <property type="entry name" value="MIP_CS"/>
</dbReference>
<dbReference type="NCBIfam" id="TIGR00861">
    <property type="entry name" value="MIP"/>
    <property type="match status" value="1"/>
</dbReference>
<dbReference type="PANTHER" id="PTHR45665:SF37">
    <property type="entry name" value="AQUAPORIN TIP2-3-RELATED"/>
    <property type="match status" value="1"/>
</dbReference>
<dbReference type="PANTHER" id="PTHR45665">
    <property type="entry name" value="AQUAPORIN-8"/>
    <property type="match status" value="1"/>
</dbReference>
<dbReference type="Pfam" id="PF00230">
    <property type="entry name" value="MIP"/>
    <property type="match status" value="1"/>
</dbReference>
<dbReference type="PRINTS" id="PR00783">
    <property type="entry name" value="MINTRINSICP"/>
</dbReference>
<dbReference type="SUPFAM" id="SSF81338">
    <property type="entry name" value="Aquaporin-like"/>
    <property type="match status" value="1"/>
</dbReference>
<dbReference type="PROSITE" id="PS00221">
    <property type="entry name" value="MIP"/>
    <property type="match status" value="1"/>
</dbReference>
<sequence length="250" mass="25245">MVKIEVGSVGDSFSVSSLKAYLSEFIATLLFVFAGVGSAVAFAKLTSDGALDPAGLVAIAIAHAFALFVGVSIAANISGGHLNPAVTLGLAIGGNITLITGFFYWIAQCLGSIVACLLLVFVTNGKSVPTHGVSAGLGAVEGVVMEIVVTFALVYTVYATAADPKKGSLGTIAPIAIGFIVGANILAAGPFSGGSMNPARSFGPAVVSGDLSQIWIYWVGPLVGGALAGLIYGDVFIGSYEAVETREIRV</sequence>
<accession>Q9FGL2</accession>
<accession>Q0WNU5</accession>
<accession>Q53XE4</accession>
<proteinExistence type="evidence at protein level"/>